<accession>Q2KIS9</accession>
<protein>
    <recommendedName>
        <fullName>Tetraspanin-8</fullName>
        <shortName>Tspan-8</shortName>
    </recommendedName>
</protein>
<gene>
    <name type="primary">TSPAN8</name>
</gene>
<proteinExistence type="evidence at transcript level"/>
<keyword id="KW-1003">Cell membrane</keyword>
<keyword id="KW-0325">Glycoprotein</keyword>
<keyword id="KW-0472">Membrane</keyword>
<keyword id="KW-1185">Reference proteome</keyword>
<keyword id="KW-0812">Transmembrane</keyword>
<keyword id="KW-1133">Transmembrane helix</keyword>
<feature type="chain" id="PRO_0000284963" description="Tetraspanin-8">
    <location>
        <begin position="1"/>
        <end position="238"/>
    </location>
</feature>
<feature type="topological domain" description="Cytoplasmic" evidence="2">
    <location>
        <begin position="1"/>
        <end position="9"/>
    </location>
</feature>
<feature type="transmembrane region" description="Helical" evidence="2">
    <location>
        <begin position="10"/>
        <end position="33"/>
    </location>
</feature>
<feature type="topological domain" description="Extracellular" evidence="2">
    <location>
        <begin position="34"/>
        <end position="57"/>
    </location>
</feature>
<feature type="transmembrane region" description="Helical" evidence="2">
    <location>
        <begin position="58"/>
        <end position="72"/>
    </location>
</feature>
<feature type="topological domain" description="Cytoplasmic" evidence="2">
    <location>
        <begin position="73"/>
        <end position="83"/>
    </location>
</feature>
<feature type="transmembrane region" description="Helical" evidence="2">
    <location>
        <begin position="84"/>
        <end position="109"/>
    </location>
</feature>
<feature type="topological domain" description="Extracellular" evidence="2">
    <location>
        <begin position="110"/>
        <end position="206"/>
    </location>
</feature>
<feature type="transmembrane region" description="Helical" evidence="2">
    <location>
        <begin position="207"/>
        <end position="231"/>
    </location>
</feature>
<feature type="topological domain" description="Cytoplasmic" evidence="2">
    <location>
        <begin position="232"/>
        <end position="238"/>
    </location>
</feature>
<feature type="glycosylation site" description="N-linked (GlcNAc...) asparagine" evidence="2">
    <location>
        <position position="118"/>
    </location>
</feature>
<organism>
    <name type="scientific">Bos taurus</name>
    <name type="common">Bovine</name>
    <dbReference type="NCBI Taxonomy" id="9913"/>
    <lineage>
        <taxon>Eukaryota</taxon>
        <taxon>Metazoa</taxon>
        <taxon>Chordata</taxon>
        <taxon>Craniata</taxon>
        <taxon>Vertebrata</taxon>
        <taxon>Euteleostomi</taxon>
        <taxon>Mammalia</taxon>
        <taxon>Eutheria</taxon>
        <taxon>Laurasiatheria</taxon>
        <taxon>Artiodactyla</taxon>
        <taxon>Ruminantia</taxon>
        <taxon>Pecora</taxon>
        <taxon>Bovidae</taxon>
        <taxon>Bovinae</taxon>
        <taxon>Bos</taxon>
    </lineage>
</organism>
<reference key="1">
    <citation type="submission" date="2006-01" db="EMBL/GenBank/DDBJ databases">
        <authorList>
            <consortium name="NIH - Mammalian Gene Collection (MGC) project"/>
        </authorList>
    </citation>
    <scope>NUCLEOTIDE SEQUENCE [LARGE SCALE MRNA]</scope>
    <source>
        <strain>Hereford</strain>
        <tissue>Testis</tissue>
    </source>
</reference>
<sequence length="238" mass="26208">MAGVNVCIKCSMFIFNFVFWLCGAIILSVAISIRAGKIGQEILAPGDADLNLFIAVNILIFVGAVIMILGFLGCCGAMKENQFMMILFFVGLLMILLLQVAAGIVATTRKSKTEQALNKTLLINARLLSSTDENERVFQKAFSELQEELKCCGLVNGASDWGSNFQHYYRTCECPSESDSSCTKYSGKTIYKQSCFASISQMFSKRLFIVLALAFGLAAIEVLGLIFSIVLYCQMRKK</sequence>
<dbReference type="EMBL" id="BC112523">
    <property type="protein sequence ID" value="AAI12524.1"/>
    <property type="molecule type" value="mRNA"/>
</dbReference>
<dbReference type="RefSeq" id="NP_001073097.1">
    <property type="nucleotide sequence ID" value="NM_001079629.2"/>
</dbReference>
<dbReference type="SMR" id="Q2KIS9"/>
<dbReference type="FunCoup" id="Q2KIS9">
    <property type="interactions" value="10"/>
</dbReference>
<dbReference type="STRING" id="9913.ENSBTAP00000025875"/>
<dbReference type="GlyCosmos" id="Q2KIS9">
    <property type="glycosylation" value="1 site, No reported glycans"/>
</dbReference>
<dbReference type="GlyGen" id="Q2KIS9">
    <property type="glycosylation" value="1 site"/>
</dbReference>
<dbReference type="PaxDb" id="9913-ENSBTAP00000025875"/>
<dbReference type="GeneID" id="617508"/>
<dbReference type="KEGG" id="bta:617508"/>
<dbReference type="CTD" id="7103"/>
<dbReference type="eggNOG" id="KOG3882">
    <property type="taxonomic scope" value="Eukaryota"/>
</dbReference>
<dbReference type="InParanoid" id="Q2KIS9"/>
<dbReference type="OrthoDB" id="5982705at2759"/>
<dbReference type="Proteomes" id="UP000009136">
    <property type="component" value="Unplaced"/>
</dbReference>
<dbReference type="GO" id="GO:0005886">
    <property type="term" value="C:plasma membrane"/>
    <property type="evidence" value="ECO:0000318"/>
    <property type="project" value="GO_Central"/>
</dbReference>
<dbReference type="FunFam" id="1.10.1450.10:FF:000031">
    <property type="entry name" value="Tetraspanin"/>
    <property type="match status" value="1"/>
</dbReference>
<dbReference type="Gene3D" id="1.10.1450.10">
    <property type="entry name" value="Tetraspanin"/>
    <property type="match status" value="1"/>
</dbReference>
<dbReference type="InterPro" id="IPR018499">
    <property type="entry name" value="Tetraspanin/Peripherin"/>
</dbReference>
<dbReference type="InterPro" id="IPR000301">
    <property type="entry name" value="Tetraspanin_animals"/>
</dbReference>
<dbReference type="InterPro" id="IPR018503">
    <property type="entry name" value="Tetraspanin_CS"/>
</dbReference>
<dbReference type="InterPro" id="IPR008952">
    <property type="entry name" value="Tetraspanin_EC2_sf"/>
</dbReference>
<dbReference type="PANTHER" id="PTHR19282">
    <property type="entry name" value="TETRASPANIN"/>
    <property type="match status" value="1"/>
</dbReference>
<dbReference type="PANTHER" id="PTHR19282:SF380">
    <property type="entry name" value="TETRASPANIN-8"/>
    <property type="match status" value="1"/>
</dbReference>
<dbReference type="Pfam" id="PF00335">
    <property type="entry name" value="Tetraspanin"/>
    <property type="match status" value="1"/>
</dbReference>
<dbReference type="PIRSF" id="PIRSF002419">
    <property type="entry name" value="Tetraspanin"/>
    <property type="match status" value="1"/>
</dbReference>
<dbReference type="PRINTS" id="PR00259">
    <property type="entry name" value="TMFOUR"/>
</dbReference>
<dbReference type="SUPFAM" id="SSF48652">
    <property type="entry name" value="Tetraspanin"/>
    <property type="match status" value="1"/>
</dbReference>
<dbReference type="PROSITE" id="PS00421">
    <property type="entry name" value="TM4_1"/>
    <property type="match status" value="1"/>
</dbReference>
<comment type="function">
    <text evidence="1">Structural component of specialized membrane microdomains known as tetraspanin-enriched microdomains (TERMs), which act as platforms for receptor clustering and signaling. Participates thereby in diverse biological functions such as cell signal transduction, migration and protein trafficking. Promotes ADAM17-mediated TNF-alpha processing through recruitment of ADAM17 to tetraspanin-enriched micro-domains (TEMs). Forms a complex with RICTOR and integrin alpha3/ITGA3 to mediate mTORC2 activation and AKT1 phosphorylation leading to cell migration. Reduces apoptosis and autophagy induced by high glucose levels through forming a complex with mTOR and RICTOR. Contributes to the maintenance of intestinal epithelial barrier and plays a role in the regulation of intestine inflammation by switching interferon gamma receptor 1/IFNGR1 from clathrin-dependent to lipid raft-dependent endocytosis route to limit STAT1 activation magnitude and duration. Acts as a modulator of the endothelin axis by associating with endothelin converting enzyme ECE1 and regulating its activity of conversion of the endothelin-1 precursor to endothelin.</text>
</comment>
<comment type="subunit">
    <text evidence="1">Forms homooligomers. Interacts with MEP1B. Interacts with integrin alpha3/ITGA3. Interacts with RICTOR and MTOR. Interacts with ADAM17. Interacts with ECE1.</text>
</comment>
<comment type="subcellular location">
    <subcellularLocation>
        <location evidence="1">Cell membrane</location>
        <topology evidence="1">Multi-pass membrane protein</topology>
    </subcellularLocation>
</comment>
<comment type="similarity">
    <text evidence="3">Belongs to the tetraspanin (TM4SF) family.</text>
</comment>
<evidence type="ECO:0000250" key="1">
    <source>
        <dbReference type="UniProtKB" id="P19075"/>
    </source>
</evidence>
<evidence type="ECO:0000255" key="2"/>
<evidence type="ECO:0000305" key="3"/>
<name>TSN8_BOVIN</name>